<reference key="1">
    <citation type="submission" date="2007-02" db="EMBL/GenBank/DDBJ databases">
        <title>Complete sequence of chromosome of Yersinia pestis Pestoides F.</title>
        <authorList>
            <consortium name="US DOE Joint Genome Institute"/>
            <person name="Copeland A."/>
            <person name="Lucas S."/>
            <person name="Lapidus A."/>
            <person name="Barry K."/>
            <person name="Detter J.C."/>
            <person name="Glavina del Rio T."/>
            <person name="Hammon N."/>
            <person name="Israni S."/>
            <person name="Dalin E."/>
            <person name="Tice H."/>
            <person name="Pitluck S."/>
            <person name="Di Bartolo G."/>
            <person name="Chain P."/>
            <person name="Malfatti S."/>
            <person name="Shin M."/>
            <person name="Vergez L."/>
            <person name="Schmutz J."/>
            <person name="Larimer F."/>
            <person name="Land M."/>
            <person name="Hauser L."/>
            <person name="Worsham P."/>
            <person name="Chu M."/>
            <person name="Bearden S."/>
            <person name="Garcia E."/>
            <person name="Richardson P."/>
        </authorList>
    </citation>
    <scope>NUCLEOTIDE SEQUENCE [LARGE SCALE GENOMIC DNA]</scope>
    <source>
        <strain>Pestoides F</strain>
    </source>
</reference>
<accession>A4TRR6</accession>
<dbReference type="EC" id="1.8.1.8" evidence="1"/>
<dbReference type="EMBL" id="CP000668">
    <property type="protein sequence ID" value="ABP41978.1"/>
    <property type="molecule type" value="Genomic_DNA"/>
</dbReference>
<dbReference type="RefSeq" id="WP_002209121.1">
    <property type="nucleotide sequence ID" value="NZ_CP009715.1"/>
</dbReference>
<dbReference type="SMR" id="A4TRR6"/>
<dbReference type="KEGG" id="ypp:YPDSF_3628"/>
<dbReference type="PATRIC" id="fig|386656.14.peg.288"/>
<dbReference type="GO" id="GO:0005886">
    <property type="term" value="C:plasma membrane"/>
    <property type="evidence" value="ECO:0007669"/>
    <property type="project" value="UniProtKB-SubCell"/>
</dbReference>
<dbReference type="GO" id="GO:0009055">
    <property type="term" value="F:electron transfer activity"/>
    <property type="evidence" value="ECO:0007669"/>
    <property type="project" value="UniProtKB-UniRule"/>
</dbReference>
<dbReference type="GO" id="GO:0047134">
    <property type="term" value="F:protein-disulfide reductase [NAD(P)H] activity"/>
    <property type="evidence" value="ECO:0007669"/>
    <property type="project" value="UniProtKB-UniRule"/>
</dbReference>
<dbReference type="GO" id="GO:0045454">
    <property type="term" value="P:cell redox homeostasis"/>
    <property type="evidence" value="ECO:0007669"/>
    <property type="project" value="TreeGrafter"/>
</dbReference>
<dbReference type="GO" id="GO:0017004">
    <property type="term" value="P:cytochrome complex assembly"/>
    <property type="evidence" value="ECO:0007669"/>
    <property type="project" value="UniProtKB-UniRule"/>
</dbReference>
<dbReference type="CDD" id="cd02953">
    <property type="entry name" value="DsbDgamma"/>
    <property type="match status" value="1"/>
</dbReference>
<dbReference type="FunFam" id="2.60.40.1250:FF:000001">
    <property type="entry name" value="Thiol:disulfide interchange protein DsbD"/>
    <property type="match status" value="1"/>
</dbReference>
<dbReference type="FunFam" id="3.40.30.10:FF:000116">
    <property type="entry name" value="Thiol:disulfide interchange protein DsbD"/>
    <property type="match status" value="1"/>
</dbReference>
<dbReference type="Gene3D" id="3.40.30.10">
    <property type="entry name" value="Glutaredoxin"/>
    <property type="match status" value="1"/>
</dbReference>
<dbReference type="Gene3D" id="2.60.40.1250">
    <property type="entry name" value="Thiol:disulfide interchange protein DsbD, N-terminal domain"/>
    <property type="match status" value="1"/>
</dbReference>
<dbReference type="HAMAP" id="MF_00399">
    <property type="entry name" value="DbsD"/>
    <property type="match status" value="1"/>
</dbReference>
<dbReference type="InterPro" id="IPR003834">
    <property type="entry name" value="Cyt_c_assmbl_TM_dom"/>
</dbReference>
<dbReference type="InterPro" id="IPR035671">
    <property type="entry name" value="DsbD_gamma"/>
</dbReference>
<dbReference type="InterPro" id="IPR028250">
    <property type="entry name" value="DsbDN"/>
</dbReference>
<dbReference type="InterPro" id="IPR036929">
    <property type="entry name" value="DsbDN_sf"/>
</dbReference>
<dbReference type="InterPro" id="IPR022910">
    <property type="entry name" value="Thiol_diS_interchange_DbsD"/>
</dbReference>
<dbReference type="InterPro" id="IPR012336">
    <property type="entry name" value="Thioredoxin-like_fold"/>
</dbReference>
<dbReference type="InterPro" id="IPR036249">
    <property type="entry name" value="Thioredoxin-like_sf"/>
</dbReference>
<dbReference type="InterPro" id="IPR017937">
    <property type="entry name" value="Thioredoxin_CS"/>
</dbReference>
<dbReference type="InterPro" id="IPR013766">
    <property type="entry name" value="Thioredoxin_domain"/>
</dbReference>
<dbReference type="NCBIfam" id="NF001419">
    <property type="entry name" value="PRK00293.1"/>
    <property type="match status" value="1"/>
</dbReference>
<dbReference type="PANTHER" id="PTHR32234">
    <property type="entry name" value="THIOL:DISULFIDE INTERCHANGE PROTEIN DSBD"/>
    <property type="match status" value="1"/>
</dbReference>
<dbReference type="PANTHER" id="PTHR32234:SF0">
    <property type="entry name" value="THIOL:DISULFIDE INTERCHANGE PROTEIN DSBD"/>
    <property type="match status" value="1"/>
</dbReference>
<dbReference type="Pfam" id="PF11412">
    <property type="entry name" value="DsbD_N"/>
    <property type="match status" value="1"/>
</dbReference>
<dbReference type="Pfam" id="PF02683">
    <property type="entry name" value="DsbD_TM"/>
    <property type="match status" value="1"/>
</dbReference>
<dbReference type="Pfam" id="PF13098">
    <property type="entry name" value="Thioredoxin_2"/>
    <property type="match status" value="1"/>
</dbReference>
<dbReference type="SUPFAM" id="SSF74863">
    <property type="entry name" value="Thiol:disulfide interchange protein DsbD, N-terminal domain (DsbD-alpha)"/>
    <property type="match status" value="1"/>
</dbReference>
<dbReference type="SUPFAM" id="SSF52833">
    <property type="entry name" value="Thioredoxin-like"/>
    <property type="match status" value="1"/>
</dbReference>
<dbReference type="PROSITE" id="PS00194">
    <property type="entry name" value="THIOREDOXIN_1"/>
    <property type="match status" value="1"/>
</dbReference>
<dbReference type="PROSITE" id="PS51352">
    <property type="entry name" value="THIOREDOXIN_2"/>
    <property type="match status" value="1"/>
</dbReference>
<proteinExistence type="inferred from homology"/>
<name>DSBD_YERPP</name>
<evidence type="ECO:0000255" key="1">
    <source>
        <dbReference type="HAMAP-Rule" id="MF_00399"/>
    </source>
</evidence>
<evidence type="ECO:0000256" key="2">
    <source>
        <dbReference type="SAM" id="MobiDB-lite"/>
    </source>
</evidence>
<feature type="signal peptide" evidence="1">
    <location>
        <begin position="1"/>
        <end position="24"/>
    </location>
</feature>
<feature type="chain" id="PRO_5000237106" description="Thiol:disulfide interchange protein DsbD">
    <location>
        <begin position="25"/>
        <end position="595"/>
    </location>
</feature>
<feature type="transmembrane region" description="Helical" evidence="1">
    <location>
        <begin position="197"/>
        <end position="217"/>
    </location>
</feature>
<feature type="transmembrane region" description="Helical" evidence="1">
    <location>
        <begin position="233"/>
        <end position="253"/>
    </location>
</feature>
<feature type="transmembrane region" description="Helical" evidence="1">
    <location>
        <begin position="270"/>
        <end position="290"/>
    </location>
</feature>
<feature type="transmembrane region" description="Helical" evidence="1">
    <location>
        <begin position="311"/>
        <end position="331"/>
    </location>
</feature>
<feature type="transmembrane region" description="Helical" evidence="1">
    <location>
        <begin position="332"/>
        <end position="352"/>
    </location>
</feature>
<feature type="transmembrane region" description="Helical" evidence="1">
    <location>
        <begin position="353"/>
        <end position="373"/>
    </location>
</feature>
<feature type="transmembrane region" description="Helical" evidence="1">
    <location>
        <begin position="384"/>
        <end position="404"/>
    </location>
</feature>
<feature type="transmembrane region" description="Helical" evidence="1">
    <location>
        <begin position="411"/>
        <end position="431"/>
    </location>
</feature>
<feature type="transmembrane region" description="Helical" evidence="1">
    <location>
        <begin position="435"/>
        <end position="455"/>
    </location>
</feature>
<feature type="domain" description="Thioredoxin" evidence="1">
    <location>
        <begin position="452"/>
        <end position="592"/>
    </location>
</feature>
<feature type="region of interest" description="Disordered" evidence="2">
    <location>
        <begin position="166"/>
        <end position="186"/>
    </location>
</feature>
<feature type="disulfide bond" description="Redox-active" evidence="1">
    <location>
        <begin position="134"/>
        <end position="140"/>
    </location>
</feature>
<feature type="disulfide bond" description="Redox-active" evidence="1">
    <location>
        <begin position="209"/>
        <end position="331"/>
    </location>
</feature>
<feature type="disulfide bond" description="Redox-active" evidence="1">
    <location>
        <begin position="507"/>
        <end position="510"/>
    </location>
</feature>
<organism>
    <name type="scientific">Yersinia pestis (strain Pestoides F)</name>
    <dbReference type="NCBI Taxonomy" id="386656"/>
    <lineage>
        <taxon>Bacteria</taxon>
        <taxon>Pseudomonadati</taxon>
        <taxon>Pseudomonadota</taxon>
        <taxon>Gammaproteobacteria</taxon>
        <taxon>Enterobacterales</taxon>
        <taxon>Yersiniaceae</taxon>
        <taxon>Yersinia</taxon>
    </lineage>
</organism>
<gene>
    <name evidence="1" type="primary">dsbD</name>
    <name type="ordered locus">YPDSF_3628</name>
</gene>
<sequence>MAQRFITLILLLCSVLLAPHSAQSSLFGENASFGTKNSQSRFIPVDQAFAFDFHQQGDQLNLSWQIHPGYYLYRQQIKIVPQQAALGAFTLPEGITHHDEFYGEVEIFKQQLTLKIPITQAAEQASVSVTYQGCAEAGFCYPPETRVIPLDVVVAASTASGTAAVNSSATVNPPATTQPEGDATPVPSTLPFSPLWALLIGIGIAFTPCVLPMYPLISAVILGREKPHSQRRILILAVVYVQGMALTYTLLGLVVAAAGLQFQAALQHPYVLIGLSVLFVLLALSMFGLYSLQLPSSLQTRLTQWSNSQRGGSLAGVFAMGALAGLICSPCTTAPLSAILLYIAQSGNMLAGGGTLYLYALGMGIPLVVVTLFGNKLIPRSGPWMQYVKEAFGFVILALPVFLLERVLGDVWGLRLWSLLAVAFFGWAFVLSLKAHAGWVRVCQLLLLAALLIVARPLQDWAFNGNTQQNAVKHINFQPVANLPQLQAVLAQAQGKPVMLDLYADWCVACKEFEKYTFSDDKVQRQLANTLLLQADVTANNAEHATLLKKFNVLGLPTILFFDSQGNEITAARVTGFMDAAQFLQHLQNTPAVTK</sequence>
<protein>
    <recommendedName>
        <fullName evidence="1">Thiol:disulfide interchange protein DsbD</fullName>
        <ecNumber evidence="1">1.8.1.8</ecNumber>
    </recommendedName>
    <alternativeName>
        <fullName evidence="1">Protein-disulfide reductase</fullName>
        <shortName evidence="1">Disulfide reductase</shortName>
    </alternativeName>
</protein>
<keyword id="KW-0997">Cell inner membrane</keyword>
<keyword id="KW-1003">Cell membrane</keyword>
<keyword id="KW-0201">Cytochrome c-type biogenesis</keyword>
<keyword id="KW-1015">Disulfide bond</keyword>
<keyword id="KW-0249">Electron transport</keyword>
<keyword id="KW-0472">Membrane</keyword>
<keyword id="KW-0520">NAD</keyword>
<keyword id="KW-0560">Oxidoreductase</keyword>
<keyword id="KW-0676">Redox-active center</keyword>
<keyword id="KW-0732">Signal</keyword>
<keyword id="KW-0812">Transmembrane</keyword>
<keyword id="KW-1133">Transmembrane helix</keyword>
<keyword id="KW-0813">Transport</keyword>
<comment type="function">
    <text evidence="1">Required to facilitate the formation of correct disulfide bonds in some periplasmic proteins and for the assembly of the periplasmic c-type cytochromes. Acts by transferring electrons from cytoplasmic thioredoxin to the periplasm. This transfer involves a cascade of disulfide bond formation and reduction steps.</text>
</comment>
<comment type="catalytic activity">
    <reaction evidence="1">
        <text>[protein]-dithiol + NAD(+) = [protein]-disulfide + NADH + H(+)</text>
        <dbReference type="Rhea" id="RHEA:18749"/>
        <dbReference type="Rhea" id="RHEA-COMP:10593"/>
        <dbReference type="Rhea" id="RHEA-COMP:10594"/>
        <dbReference type="ChEBI" id="CHEBI:15378"/>
        <dbReference type="ChEBI" id="CHEBI:29950"/>
        <dbReference type="ChEBI" id="CHEBI:50058"/>
        <dbReference type="ChEBI" id="CHEBI:57540"/>
        <dbReference type="ChEBI" id="CHEBI:57945"/>
        <dbReference type="EC" id="1.8.1.8"/>
    </reaction>
</comment>
<comment type="catalytic activity">
    <reaction evidence="1">
        <text>[protein]-dithiol + NADP(+) = [protein]-disulfide + NADPH + H(+)</text>
        <dbReference type="Rhea" id="RHEA:18753"/>
        <dbReference type="Rhea" id="RHEA-COMP:10593"/>
        <dbReference type="Rhea" id="RHEA-COMP:10594"/>
        <dbReference type="ChEBI" id="CHEBI:15378"/>
        <dbReference type="ChEBI" id="CHEBI:29950"/>
        <dbReference type="ChEBI" id="CHEBI:50058"/>
        <dbReference type="ChEBI" id="CHEBI:57783"/>
        <dbReference type="ChEBI" id="CHEBI:58349"/>
        <dbReference type="EC" id="1.8.1.8"/>
    </reaction>
</comment>
<comment type="subcellular location">
    <subcellularLocation>
        <location evidence="1">Cell inner membrane</location>
        <topology evidence="1">Multi-pass membrane protein</topology>
    </subcellularLocation>
</comment>
<comment type="similarity">
    <text evidence="1">Belongs to the thioredoxin family. DsbD subfamily.</text>
</comment>